<name>CFI_MAIZE</name>
<dbReference type="EC" id="5.5.1.6"/>
<dbReference type="EMBL" id="Z22760">
    <property type="protein sequence ID" value="CAA80441.1"/>
    <property type="molecule type" value="Genomic_DNA"/>
</dbReference>
<dbReference type="PIR" id="S41570">
    <property type="entry name" value="S41570"/>
</dbReference>
<dbReference type="SMR" id="Q08704"/>
<dbReference type="FunCoup" id="Q08704">
    <property type="interactions" value="1104"/>
</dbReference>
<dbReference type="STRING" id="4577.Q08704"/>
<dbReference type="PaxDb" id="4577-GRMZM2G155329_P01"/>
<dbReference type="MaizeGDB" id="56296"/>
<dbReference type="eggNOG" id="ENOG502QR5P">
    <property type="taxonomic scope" value="Eukaryota"/>
</dbReference>
<dbReference type="InParanoid" id="Q08704"/>
<dbReference type="UniPathway" id="UPA00154"/>
<dbReference type="Proteomes" id="UP000007305">
    <property type="component" value="Unplaced"/>
</dbReference>
<dbReference type="ExpressionAtlas" id="Q08704">
    <property type="expression patterns" value="baseline and differential"/>
</dbReference>
<dbReference type="GO" id="GO:0045430">
    <property type="term" value="F:chalcone isomerase activity"/>
    <property type="evidence" value="ECO:0007669"/>
    <property type="project" value="UniProtKB-EC"/>
</dbReference>
<dbReference type="GO" id="GO:0009813">
    <property type="term" value="P:flavonoid biosynthetic process"/>
    <property type="evidence" value="ECO:0007669"/>
    <property type="project" value="UniProtKB-UniPathway"/>
</dbReference>
<dbReference type="Gene3D" id="1.10.890.20">
    <property type="match status" value="1"/>
</dbReference>
<dbReference type="Gene3D" id="3.50.70.10">
    <property type="match status" value="1"/>
</dbReference>
<dbReference type="InterPro" id="IPR044164">
    <property type="entry name" value="CFI"/>
</dbReference>
<dbReference type="InterPro" id="IPR016087">
    <property type="entry name" value="Chalcone_isomerase"/>
</dbReference>
<dbReference type="InterPro" id="IPR016088">
    <property type="entry name" value="Chalcone_isomerase_3-sand"/>
</dbReference>
<dbReference type="InterPro" id="IPR016089">
    <property type="entry name" value="Chalcone_isomerase_bundle_sf"/>
</dbReference>
<dbReference type="InterPro" id="IPR036298">
    <property type="entry name" value="Chalcone_isomerase_sf"/>
</dbReference>
<dbReference type="PANTHER" id="PTHR28039:SF8">
    <property type="entry name" value="CHALCONE--FLAVANONE ISOMERASE 1-RELATED"/>
    <property type="match status" value="1"/>
</dbReference>
<dbReference type="PANTHER" id="PTHR28039">
    <property type="entry name" value="CHALCONE--FLAVONONE ISOMERASE 1-RELATED"/>
    <property type="match status" value="1"/>
</dbReference>
<dbReference type="Pfam" id="PF02431">
    <property type="entry name" value="Chalcone"/>
    <property type="match status" value="1"/>
</dbReference>
<dbReference type="SUPFAM" id="SSF54626">
    <property type="entry name" value="Chalcone isomerase"/>
    <property type="match status" value="1"/>
</dbReference>
<protein>
    <recommendedName>
        <fullName>Chalcone--flavanone isomerase</fullName>
        <shortName>Chalcone isomerase</shortName>
        <ecNumber>5.5.1.6</ecNumber>
    </recommendedName>
</protein>
<gene>
    <name type="primary">CHI</name>
    <name type="synonym">CHI1</name>
</gene>
<proteinExistence type="evidence at transcript level"/>
<evidence type="ECO:0000250" key="1"/>
<evidence type="ECO:0000269" key="2">
    <source>
    </source>
</evidence>
<evidence type="ECO:0000305" key="3"/>
<reference key="1">
    <citation type="journal article" date="1994" name="Mol. Gen. Genet.">
        <title>Isolation and characterization of a maize gene encoding chalcone flavonone isomerase.</title>
        <authorList>
            <person name="Grotewold E."/>
            <person name="Peterson T."/>
        </authorList>
    </citation>
    <scope>NUCLEOTIDE SEQUENCE [GENOMIC DNA]</scope>
    <scope>TISSUE SPECIFICITY</scope>
</reference>
<feature type="chain" id="PRO_0000166433" description="Chalcone--flavanone isomerase">
    <location>
        <begin position="1"/>
        <end position="231"/>
    </location>
</feature>
<feature type="binding site" evidence="1">
    <location>
        <position position="46"/>
    </location>
    <ligand>
        <name>substrate</name>
    </ligand>
</feature>
<feature type="binding site" evidence="1">
    <location>
        <position position="111"/>
    </location>
    <ligand>
        <name>substrate</name>
    </ligand>
</feature>
<feature type="binding site" evidence="1">
    <location>
        <position position="188"/>
    </location>
    <ligand>
        <name>substrate</name>
    </ligand>
</feature>
<feature type="site" description="Important for catalytic activity" evidence="1">
    <location>
        <position position="104"/>
    </location>
</feature>
<sequence length="231" mass="24250">MACRRWWSTAVVFPPVARPPGSAGSHFLGGAGVRGVEIGGNFIKFTAIGVYLEDAAVPALAKKWGGKTADELASDAAFFRDVVTGDFEKFTRVTMILPLTGEQYAEKVTENCVAFWKAAGLYTDAEGVAVEKFREVFKPETFAPGRSILFTHSPAGVLTVAFSKDSSVPAAGGVAIENKRLCEAVLESIIGERGVSPAAKLSLAARVSELLAKETAAAADAPQAEPVSITA</sequence>
<accession>Q08704</accession>
<comment type="function">
    <text evidence="1">Catalyzes the intramolecular cyclization of bicyclic chalcones into tricyclic (S)-flavanones. Responsible for the isomerization of 4,2',4',6'-tetrahydroxychalcone (also termed chalcone) into naringenin (By similarity).</text>
</comment>
<comment type="catalytic activity">
    <reaction>
        <text>a chalcone = a flavanone.</text>
        <dbReference type="EC" id="5.5.1.6"/>
    </reaction>
</comment>
<comment type="pathway">
    <text>Secondary metabolite biosynthesis; flavonoid biosynthesis.</text>
</comment>
<comment type="tissue specificity">
    <text evidence="2">Pericarp.</text>
</comment>
<comment type="miscellaneous">
    <text>Part of the biosynthetic pathway for all classes of flavonoids, a large class of secondary plant metabolites, many of which are brightly colored.</text>
</comment>
<comment type="similarity">
    <text evidence="3">Belongs to the chalcone isomerase family.</text>
</comment>
<keyword id="KW-0284">Flavonoid biosynthesis</keyword>
<keyword id="KW-0413">Isomerase</keyword>
<keyword id="KW-1185">Reference proteome</keyword>
<organism>
    <name type="scientific">Zea mays</name>
    <name type="common">Maize</name>
    <dbReference type="NCBI Taxonomy" id="4577"/>
    <lineage>
        <taxon>Eukaryota</taxon>
        <taxon>Viridiplantae</taxon>
        <taxon>Streptophyta</taxon>
        <taxon>Embryophyta</taxon>
        <taxon>Tracheophyta</taxon>
        <taxon>Spermatophyta</taxon>
        <taxon>Magnoliopsida</taxon>
        <taxon>Liliopsida</taxon>
        <taxon>Poales</taxon>
        <taxon>Poaceae</taxon>
        <taxon>PACMAD clade</taxon>
        <taxon>Panicoideae</taxon>
        <taxon>Andropogonodae</taxon>
        <taxon>Andropogoneae</taxon>
        <taxon>Tripsacinae</taxon>
        <taxon>Zea</taxon>
    </lineage>
</organism>